<keyword id="KW-0249">Electron transport</keyword>
<keyword id="KW-0349">Heme</keyword>
<keyword id="KW-0408">Iron</keyword>
<keyword id="KW-0479">Metal-binding</keyword>
<keyword id="KW-0496">Mitochondrion</keyword>
<keyword id="KW-1185">Reference proteome</keyword>
<keyword id="KW-0679">Respiratory chain</keyword>
<keyword id="KW-0813">Transport</keyword>
<accession>Q869N1</accession>
<accession>Q553C6</accession>
<name>CYC_DICDI</name>
<organism>
    <name type="scientific">Dictyostelium discoideum</name>
    <name type="common">Social amoeba</name>
    <dbReference type="NCBI Taxonomy" id="44689"/>
    <lineage>
        <taxon>Eukaryota</taxon>
        <taxon>Amoebozoa</taxon>
        <taxon>Evosea</taxon>
        <taxon>Eumycetozoa</taxon>
        <taxon>Dictyostelia</taxon>
        <taxon>Dictyosteliales</taxon>
        <taxon>Dictyosteliaceae</taxon>
        <taxon>Dictyostelium</taxon>
    </lineage>
</organism>
<dbReference type="EMBL" id="AAFI02000013">
    <property type="protein sequence ID" value="EAL69519.1"/>
    <property type="molecule type" value="Genomic_DNA"/>
</dbReference>
<dbReference type="RefSeq" id="XP_643492.1">
    <property type="nucleotide sequence ID" value="XM_638400.1"/>
</dbReference>
<dbReference type="SMR" id="Q869N1"/>
<dbReference type="FunCoup" id="Q869N1">
    <property type="interactions" value="263"/>
</dbReference>
<dbReference type="STRING" id="44689.Q869N1"/>
<dbReference type="PaxDb" id="44689-DDB0216257"/>
<dbReference type="EnsemblProtists" id="EAL69519">
    <property type="protein sequence ID" value="EAL69519"/>
    <property type="gene ID" value="DDB_G0275537"/>
</dbReference>
<dbReference type="GeneID" id="8620073"/>
<dbReference type="KEGG" id="ddi:DDB_G0275537"/>
<dbReference type="dictyBase" id="DDB_G0275537">
    <property type="gene designation" value="cytC"/>
</dbReference>
<dbReference type="VEuPathDB" id="AmoebaDB:DDB_G0275537"/>
<dbReference type="eggNOG" id="KOG3453">
    <property type="taxonomic scope" value="Eukaryota"/>
</dbReference>
<dbReference type="HOGENOM" id="CLU_060944_3_0_1"/>
<dbReference type="InParanoid" id="Q869N1"/>
<dbReference type="OMA" id="KARCAQC"/>
<dbReference type="PhylomeDB" id="Q869N1"/>
<dbReference type="Reactome" id="R-DDI-111457">
    <property type="pathway name" value="Release of apoptotic factors from the mitochondria"/>
</dbReference>
<dbReference type="Reactome" id="R-DDI-2151201">
    <property type="pathway name" value="Transcriptional activation of mitochondrial biogenesis"/>
</dbReference>
<dbReference type="Reactome" id="R-DDI-3299685">
    <property type="pathway name" value="Detoxification of Reactive Oxygen Species"/>
</dbReference>
<dbReference type="Reactome" id="R-DDI-5620971">
    <property type="pathway name" value="Pyroptosis"/>
</dbReference>
<dbReference type="Reactome" id="R-DDI-611105">
    <property type="pathway name" value="Respiratory electron transport"/>
</dbReference>
<dbReference type="PRO" id="PR:Q869N1"/>
<dbReference type="Proteomes" id="UP000002195">
    <property type="component" value="Chromosome 2"/>
</dbReference>
<dbReference type="GO" id="GO:0005758">
    <property type="term" value="C:mitochondrial intermembrane space"/>
    <property type="evidence" value="ECO:0000250"/>
    <property type="project" value="dictyBase"/>
</dbReference>
<dbReference type="GO" id="GO:0009055">
    <property type="term" value="F:electron transfer activity"/>
    <property type="evidence" value="ECO:0000250"/>
    <property type="project" value="dictyBase"/>
</dbReference>
<dbReference type="GO" id="GO:0020037">
    <property type="term" value="F:heme binding"/>
    <property type="evidence" value="ECO:0007669"/>
    <property type="project" value="InterPro"/>
</dbReference>
<dbReference type="GO" id="GO:0046872">
    <property type="term" value="F:metal ion binding"/>
    <property type="evidence" value="ECO:0007669"/>
    <property type="project" value="UniProtKB-KW"/>
</dbReference>
<dbReference type="GO" id="GO:0006123">
    <property type="term" value="P:mitochondrial electron transport, cytochrome c to oxygen"/>
    <property type="evidence" value="ECO:0000250"/>
    <property type="project" value="dictyBase"/>
</dbReference>
<dbReference type="GO" id="GO:0006122">
    <property type="term" value="P:mitochondrial electron transport, ubiquinol to cytochrome c"/>
    <property type="evidence" value="ECO:0000250"/>
    <property type="project" value="dictyBase"/>
</dbReference>
<dbReference type="FunFam" id="1.10.760.10:FF:000001">
    <property type="entry name" value="Cytochrome c iso-1"/>
    <property type="match status" value="1"/>
</dbReference>
<dbReference type="Gene3D" id="1.10.760.10">
    <property type="entry name" value="Cytochrome c-like domain"/>
    <property type="match status" value="1"/>
</dbReference>
<dbReference type="InterPro" id="IPR009056">
    <property type="entry name" value="Cyt_c-like_dom"/>
</dbReference>
<dbReference type="InterPro" id="IPR036909">
    <property type="entry name" value="Cyt_c-like_dom_sf"/>
</dbReference>
<dbReference type="InterPro" id="IPR002327">
    <property type="entry name" value="Cyt_c_1A/1B"/>
</dbReference>
<dbReference type="PANTHER" id="PTHR11961">
    <property type="entry name" value="CYTOCHROME C"/>
    <property type="match status" value="1"/>
</dbReference>
<dbReference type="Pfam" id="PF00034">
    <property type="entry name" value="Cytochrom_C"/>
    <property type="match status" value="1"/>
</dbReference>
<dbReference type="PRINTS" id="PR00604">
    <property type="entry name" value="CYTCHRMECIAB"/>
</dbReference>
<dbReference type="SUPFAM" id="SSF46626">
    <property type="entry name" value="Cytochrome c"/>
    <property type="match status" value="1"/>
</dbReference>
<dbReference type="PROSITE" id="PS51007">
    <property type="entry name" value="CYTC"/>
    <property type="match status" value="1"/>
</dbReference>
<feature type="chain" id="PRO_0000327859" description="Cytochrome c">
    <location>
        <begin position="1"/>
        <end position="113"/>
    </location>
</feature>
<feature type="binding site" description="covalent" evidence="2">
    <location>
        <position position="21"/>
    </location>
    <ligand>
        <name>heme c</name>
        <dbReference type="ChEBI" id="CHEBI:61717"/>
    </ligand>
</feature>
<feature type="binding site" description="covalent" evidence="2">
    <location>
        <position position="24"/>
    </location>
    <ligand>
        <name>heme c</name>
        <dbReference type="ChEBI" id="CHEBI:61717"/>
    </ligand>
</feature>
<feature type="binding site" description="axial binding residue" evidence="2">
    <location>
        <position position="25"/>
    </location>
    <ligand>
        <name>heme c</name>
        <dbReference type="ChEBI" id="CHEBI:61717"/>
    </ligand>
    <ligandPart>
        <name>Fe</name>
        <dbReference type="ChEBI" id="CHEBI:18248"/>
    </ligandPart>
</feature>
<feature type="binding site" description="axial binding residue" evidence="2">
    <location>
        <position position="90"/>
    </location>
    <ligand>
        <name>heme c</name>
        <dbReference type="ChEBI" id="CHEBI:61717"/>
    </ligand>
    <ligandPart>
        <name>Fe</name>
        <dbReference type="ChEBI" id="CHEBI:18248"/>
    </ligandPart>
</feature>
<evidence type="ECO:0000250" key="1"/>
<evidence type="ECO:0000255" key="2">
    <source>
        <dbReference type="PROSITE-ProRule" id="PRU00433"/>
    </source>
</evidence>
<evidence type="ECO:0000305" key="3"/>
<gene>
    <name type="primary">cytC</name>
    <name type="ORF">DDB_G0275537</name>
</gene>
<sequence length="113" mass="12715">MSDIIARGNVENGDKLFKARCAQCHTTANGAPNKQGPNLYGLFFPKSRSFPGYAYSDPNKNTGKFCIMWGEQTLFDYLENPKKYIPKTKMAFAGFKSEQDRADVVAYLEQSTK</sequence>
<comment type="function">
    <text evidence="1">Electron carrier protein. The oxidized form of the cytochrome c heme group can accept an electron from the heme group of the cytochrome c1 subunit of cytochrome reductase. Cytochrome c then transfers this electron to the cytochrome oxidase complex, the final protein carrier in the mitochondrial electron-transport chain (By similarity).</text>
</comment>
<comment type="subcellular location">
    <subcellularLocation>
        <location evidence="1">Mitochondrion intermembrane space</location>
    </subcellularLocation>
    <text evidence="1">Loosely associated with the inner membrane.</text>
</comment>
<comment type="PTM">
    <text evidence="1">Binds 1 heme c group covalently per subunit.</text>
</comment>
<comment type="similarity">
    <text evidence="3">Belongs to the cytochrome c family.</text>
</comment>
<reference key="1">
    <citation type="journal article" date="2002" name="Nature">
        <title>Sequence and analysis of chromosome 2 of Dictyostelium discoideum.</title>
        <authorList>
            <person name="Gloeckner G."/>
            <person name="Eichinger L."/>
            <person name="Szafranski K."/>
            <person name="Pachebat J.A."/>
            <person name="Bankier A.T."/>
            <person name="Dear P.H."/>
            <person name="Lehmann R."/>
            <person name="Baumgart C."/>
            <person name="Parra G."/>
            <person name="Abril J.F."/>
            <person name="Guigo R."/>
            <person name="Kumpf K."/>
            <person name="Tunggal B."/>
            <person name="Cox E.C."/>
            <person name="Quail M.A."/>
            <person name="Platzer M."/>
            <person name="Rosenthal A."/>
            <person name="Noegel A.A."/>
        </authorList>
    </citation>
    <scope>NUCLEOTIDE SEQUENCE [LARGE SCALE GENOMIC DNA]</scope>
    <source>
        <strain>AX4</strain>
    </source>
</reference>
<reference key="2">
    <citation type="journal article" date="2005" name="Nature">
        <title>The genome of the social amoeba Dictyostelium discoideum.</title>
        <authorList>
            <person name="Eichinger L."/>
            <person name="Pachebat J.A."/>
            <person name="Gloeckner G."/>
            <person name="Rajandream M.A."/>
            <person name="Sucgang R."/>
            <person name="Berriman M."/>
            <person name="Song J."/>
            <person name="Olsen R."/>
            <person name="Szafranski K."/>
            <person name="Xu Q."/>
            <person name="Tunggal B."/>
            <person name="Kummerfeld S."/>
            <person name="Madera M."/>
            <person name="Konfortov B.A."/>
            <person name="Rivero F."/>
            <person name="Bankier A.T."/>
            <person name="Lehmann R."/>
            <person name="Hamlin N."/>
            <person name="Davies R."/>
            <person name="Gaudet P."/>
            <person name="Fey P."/>
            <person name="Pilcher K."/>
            <person name="Chen G."/>
            <person name="Saunders D."/>
            <person name="Sodergren E.J."/>
            <person name="Davis P."/>
            <person name="Kerhornou A."/>
            <person name="Nie X."/>
            <person name="Hall N."/>
            <person name="Anjard C."/>
            <person name="Hemphill L."/>
            <person name="Bason N."/>
            <person name="Farbrother P."/>
            <person name="Desany B."/>
            <person name="Just E."/>
            <person name="Morio T."/>
            <person name="Rost R."/>
            <person name="Churcher C.M."/>
            <person name="Cooper J."/>
            <person name="Haydock S."/>
            <person name="van Driessche N."/>
            <person name="Cronin A."/>
            <person name="Goodhead I."/>
            <person name="Muzny D.M."/>
            <person name="Mourier T."/>
            <person name="Pain A."/>
            <person name="Lu M."/>
            <person name="Harper D."/>
            <person name="Lindsay R."/>
            <person name="Hauser H."/>
            <person name="James K.D."/>
            <person name="Quiles M."/>
            <person name="Madan Babu M."/>
            <person name="Saito T."/>
            <person name="Buchrieser C."/>
            <person name="Wardroper A."/>
            <person name="Felder M."/>
            <person name="Thangavelu M."/>
            <person name="Johnson D."/>
            <person name="Knights A."/>
            <person name="Loulseged H."/>
            <person name="Mungall K.L."/>
            <person name="Oliver K."/>
            <person name="Price C."/>
            <person name="Quail M.A."/>
            <person name="Urushihara H."/>
            <person name="Hernandez J."/>
            <person name="Rabbinowitsch E."/>
            <person name="Steffen D."/>
            <person name="Sanders M."/>
            <person name="Ma J."/>
            <person name="Kohara Y."/>
            <person name="Sharp S."/>
            <person name="Simmonds M.N."/>
            <person name="Spiegler S."/>
            <person name="Tivey A."/>
            <person name="Sugano S."/>
            <person name="White B."/>
            <person name="Walker D."/>
            <person name="Woodward J.R."/>
            <person name="Winckler T."/>
            <person name="Tanaka Y."/>
            <person name="Shaulsky G."/>
            <person name="Schleicher M."/>
            <person name="Weinstock G.M."/>
            <person name="Rosenthal A."/>
            <person name="Cox E.C."/>
            <person name="Chisholm R.L."/>
            <person name="Gibbs R.A."/>
            <person name="Loomis W.F."/>
            <person name="Platzer M."/>
            <person name="Kay R.R."/>
            <person name="Williams J.G."/>
            <person name="Dear P.H."/>
            <person name="Noegel A.A."/>
            <person name="Barrell B.G."/>
            <person name="Kuspa A."/>
        </authorList>
    </citation>
    <scope>NUCLEOTIDE SEQUENCE [LARGE SCALE GENOMIC DNA]</scope>
    <source>
        <strain>AX4</strain>
    </source>
</reference>
<proteinExistence type="inferred from homology"/>
<protein>
    <recommendedName>
        <fullName>Cytochrome c</fullName>
    </recommendedName>
</protein>